<protein>
    <recommendedName>
        <fullName evidence="1">Exodeoxyribonuclease 7 small subunit</fullName>
        <ecNumber evidence="1">3.1.11.6</ecNumber>
    </recommendedName>
    <alternativeName>
        <fullName evidence="1">Exodeoxyribonuclease VII small subunit</fullName>
        <shortName evidence="1">Exonuclease VII small subunit</shortName>
    </alternativeName>
</protein>
<comment type="function">
    <text evidence="1">Bidirectionally degrades single-stranded DNA into large acid-insoluble oligonucleotides, which are then degraded further into small acid-soluble oligonucleotides.</text>
</comment>
<comment type="catalytic activity">
    <reaction evidence="1">
        <text>Exonucleolytic cleavage in either 5'- to 3'- or 3'- to 5'-direction to yield nucleoside 5'-phosphates.</text>
        <dbReference type="EC" id="3.1.11.6"/>
    </reaction>
</comment>
<comment type="subunit">
    <text evidence="1">Heterooligomer composed of large and small subunits.</text>
</comment>
<comment type="subcellular location">
    <subcellularLocation>
        <location evidence="1">Cytoplasm</location>
    </subcellularLocation>
</comment>
<comment type="similarity">
    <text evidence="1">Belongs to the XseB family.</text>
</comment>
<keyword id="KW-0963">Cytoplasm</keyword>
<keyword id="KW-0269">Exonuclease</keyword>
<keyword id="KW-0378">Hydrolase</keyword>
<keyword id="KW-0540">Nuclease</keyword>
<name>EX7S_THEPX</name>
<feature type="chain" id="PRO_1000119966" description="Exodeoxyribonuclease 7 small subunit">
    <location>
        <begin position="1"/>
        <end position="75"/>
    </location>
</feature>
<organism>
    <name type="scientific">Thermoanaerobacter sp. (strain X514)</name>
    <dbReference type="NCBI Taxonomy" id="399726"/>
    <lineage>
        <taxon>Bacteria</taxon>
        <taxon>Bacillati</taxon>
        <taxon>Bacillota</taxon>
        <taxon>Clostridia</taxon>
        <taxon>Thermoanaerobacterales</taxon>
        <taxon>Thermoanaerobacteraceae</taxon>
        <taxon>Thermoanaerobacter</taxon>
    </lineage>
</organism>
<accession>B0K0U9</accession>
<reference key="1">
    <citation type="submission" date="2008-01" db="EMBL/GenBank/DDBJ databases">
        <title>Complete sequence of Thermoanaerobacter sp. X514.</title>
        <authorList>
            <consortium name="US DOE Joint Genome Institute"/>
            <person name="Copeland A."/>
            <person name="Lucas S."/>
            <person name="Lapidus A."/>
            <person name="Barry K."/>
            <person name="Glavina del Rio T."/>
            <person name="Dalin E."/>
            <person name="Tice H."/>
            <person name="Pitluck S."/>
            <person name="Bruce D."/>
            <person name="Goodwin L."/>
            <person name="Saunders E."/>
            <person name="Brettin T."/>
            <person name="Detter J.C."/>
            <person name="Han C."/>
            <person name="Schmutz J."/>
            <person name="Larimer F."/>
            <person name="Land M."/>
            <person name="Hauser L."/>
            <person name="Kyrpides N."/>
            <person name="Kim E."/>
            <person name="Hemme C."/>
            <person name="Fields M.W."/>
            <person name="He Z."/>
            <person name="Zhou J."/>
            <person name="Richardson P."/>
        </authorList>
    </citation>
    <scope>NUCLEOTIDE SEQUENCE [LARGE SCALE GENOMIC DNA]</scope>
    <source>
        <strain>X514</strain>
    </source>
</reference>
<proteinExistence type="inferred from homology"/>
<evidence type="ECO:0000255" key="1">
    <source>
        <dbReference type="HAMAP-Rule" id="MF_00337"/>
    </source>
</evidence>
<dbReference type="EC" id="3.1.11.6" evidence="1"/>
<dbReference type="EMBL" id="CP000923">
    <property type="protein sequence ID" value="ABY92824.1"/>
    <property type="molecule type" value="Genomic_DNA"/>
</dbReference>
<dbReference type="RefSeq" id="WP_003868778.1">
    <property type="nucleotide sequence ID" value="NC_010320.1"/>
</dbReference>
<dbReference type="SMR" id="B0K0U9"/>
<dbReference type="KEGG" id="tex:Teth514_1537"/>
<dbReference type="HOGENOM" id="CLU_145918_3_2_9"/>
<dbReference type="Proteomes" id="UP000002155">
    <property type="component" value="Chromosome"/>
</dbReference>
<dbReference type="GO" id="GO:0005829">
    <property type="term" value="C:cytosol"/>
    <property type="evidence" value="ECO:0007669"/>
    <property type="project" value="TreeGrafter"/>
</dbReference>
<dbReference type="GO" id="GO:0009318">
    <property type="term" value="C:exodeoxyribonuclease VII complex"/>
    <property type="evidence" value="ECO:0007669"/>
    <property type="project" value="InterPro"/>
</dbReference>
<dbReference type="GO" id="GO:0008855">
    <property type="term" value="F:exodeoxyribonuclease VII activity"/>
    <property type="evidence" value="ECO:0007669"/>
    <property type="project" value="UniProtKB-UniRule"/>
</dbReference>
<dbReference type="GO" id="GO:0006308">
    <property type="term" value="P:DNA catabolic process"/>
    <property type="evidence" value="ECO:0007669"/>
    <property type="project" value="UniProtKB-UniRule"/>
</dbReference>
<dbReference type="Gene3D" id="1.10.287.1040">
    <property type="entry name" value="Exonuclease VII, small subunit"/>
    <property type="match status" value="1"/>
</dbReference>
<dbReference type="HAMAP" id="MF_00337">
    <property type="entry name" value="Exonuc_7_S"/>
    <property type="match status" value="1"/>
</dbReference>
<dbReference type="InterPro" id="IPR003761">
    <property type="entry name" value="Exonuc_VII_S"/>
</dbReference>
<dbReference type="InterPro" id="IPR037004">
    <property type="entry name" value="Exonuc_VII_ssu_sf"/>
</dbReference>
<dbReference type="NCBIfam" id="TIGR01280">
    <property type="entry name" value="xseB"/>
    <property type="match status" value="1"/>
</dbReference>
<dbReference type="PANTHER" id="PTHR34137">
    <property type="entry name" value="EXODEOXYRIBONUCLEASE 7 SMALL SUBUNIT"/>
    <property type="match status" value="1"/>
</dbReference>
<dbReference type="PANTHER" id="PTHR34137:SF1">
    <property type="entry name" value="EXODEOXYRIBONUCLEASE 7 SMALL SUBUNIT"/>
    <property type="match status" value="1"/>
</dbReference>
<dbReference type="Pfam" id="PF02609">
    <property type="entry name" value="Exonuc_VII_S"/>
    <property type="match status" value="1"/>
</dbReference>
<dbReference type="PIRSF" id="PIRSF006488">
    <property type="entry name" value="Exonuc_VII_S"/>
    <property type="match status" value="1"/>
</dbReference>
<dbReference type="SUPFAM" id="SSF116842">
    <property type="entry name" value="XseB-like"/>
    <property type="match status" value="1"/>
</dbReference>
<gene>
    <name evidence="1" type="primary">xseB</name>
    <name type="ordered locus">Teth514_1537</name>
</gene>
<sequence>MNEELTFEEEMMRLEEIVNTLEKGNLMLEESFNLFKEGVEISKRLEKRLSEVEGKITLLINENEEIDFKEEEKDV</sequence>